<keyword id="KW-0027">Amidation</keyword>
<keyword id="KW-0165">Cleavage on pair of basic residues</keyword>
<keyword id="KW-0903">Direct protein sequencing</keyword>
<keyword id="KW-0372">Hormone</keyword>
<keyword id="KW-1185">Reference proteome</keyword>
<keyword id="KW-0964">Secreted</keyword>
<keyword id="KW-0732">Signal</keyword>
<feature type="signal peptide" evidence="3">
    <location>
        <begin position="1" status="less than"/>
        <end position="19"/>
    </location>
</feature>
<feature type="peptide" id="PRO_0000025374" description="Pancreatic polypeptide">
    <location>
        <begin position="20"/>
        <end position="55"/>
    </location>
</feature>
<feature type="peptide" id="PRO_0000025375" description="Pancreatic icosapeptide">
    <location>
        <begin position="59"/>
        <end position="78"/>
    </location>
</feature>
<feature type="modified residue" description="Tyrosine amide" evidence="1">
    <location>
        <position position="55"/>
    </location>
</feature>
<feature type="non-terminal residue">
    <location>
        <position position="1"/>
    </location>
</feature>
<feature type="non-terminal residue">
    <location>
        <position position="78"/>
    </location>
</feature>
<proteinExistence type="evidence at protein level"/>
<sequence>LLLSTCVALLLQPPLGALGASLEPEYPGDNATPEQMAQYAAELRRYINMLTRPRYGKRDKEGTLDFLECGSPHSAVPR</sequence>
<protein>
    <recommendedName>
        <fullName evidence="6">Pancreatic polypeptide prohormone</fullName>
    </recommendedName>
    <component>
        <recommendedName>
            <fullName evidence="4">Pancreatic polypeptide</fullName>
            <shortName evidence="4">PP</shortName>
        </recommendedName>
    </component>
    <component>
        <recommendedName>
            <fullName evidence="5">Pancreatic icosapeptide</fullName>
            <shortName>PI</shortName>
        </recommendedName>
    </component>
</protein>
<gene>
    <name type="primary">PPY</name>
</gene>
<name>PAHO_SHEEP</name>
<comment type="function">
    <molecule>Pancreatic polypeptide</molecule>
    <text evidence="2">Hormone secreted by pancreatic cells that acts as a regulator of pancreatic and gastrointestinal functions probably by signaling through the G protein-coupled receptor NPY4R2.</text>
</comment>
<comment type="subcellular location">
    <subcellularLocation>
        <location evidence="2">Secreted</location>
    </subcellularLocation>
</comment>
<comment type="similarity">
    <text evidence="6">Belongs to the NPY family.</text>
</comment>
<dbReference type="EMBL" id="AY427976">
    <property type="protein sequence ID" value="AAR11453.1"/>
    <property type="molecule type" value="mRNA"/>
</dbReference>
<dbReference type="PIR" id="B94465">
    <property type="entry name" value="PCSH"/>
</dbReference>
<dbReference type="BMRB" id="P01301"/>
<dbReference type="SMR" id="P01301"/>
<dbReference type="Proteomes" id="UP000002356">
    <property type="component" value="Unplaced"/>
</dbReference>
<dbReference type="GO" id="GO:0005615">
    <property type="term" value="C:extracellular space"/>
    <property type="evidence" value="ECO:0007669"/>
    <property type="project" value="TreeGrafter"/>
</dbReference>
<dbReference type="GO" id="GO:0005184">
    <property type="term" value="F:neuropeptide hormone activity"/>
    <property type="evidence" value="ECO:0007669"/>
    <property type="project" value="TreeGrafter"/>
</dbReference>
<dbReference type="GO" id="GO:0031841">
    <property type="term" value="F:neuropeptide Y receptor binding"/>
    <property type="evidence" value="ECO:0007669"/>
    <property type="project" value="TreeGrafter"/>
</dbReference>
<dbReference type="GO" id="GO:0007631">
    <property type="term" value="P:feeding behavior"/>
    <property type="evidence" value="ECO:0007669"/>
    <property type="project" value="TreeGrafter"/>
</dbReference>
<dbReference type="GO" id="GO:0007218">
    <property type="term" value="P:neuropeptide signaling pathway"/>
    <property type="evidence" value="ECO:0007669"/>
    <property type="project" value="TreeGrafter"/>
</dbReference>
<dbReference type="CDD" id="cd00126">
    <property type="entry name" value="PAH"/>
    <property type="match status" value="1"/>
</dbReference>
<dbReference type="Gene3D" id="6.10.250.900">
    <property type="match status" value="1"/>
</dbReference>
<dbReference type="InterPro" id="IPR001955">
    <property type="entry name" value="Pancreatic_hormone-like"/>
</dbReference>
<dbReference type="InterPro" id="IPR020392">
    <property type="entry name" value="Pancreatic_hormone-like_CS"/>
</dbReference>
<dbReference type="PANTHER" id="PTHR10533">
    <property type="entry name" value="NEUROPEPTIDE Y/PANCREATIC HORMONE/PEPTIDE YY"/>
    <property type="match status" value="1"/>
</dbReference>
<dbReference type="PANTHER" id="PTHR10533:SF2">
    <property type="entry name" value="PANCREATIC POLYPEPTIDE PROHORMONE"/>
    <property type="match status" value="1"/>
</dbReference>
<dbReference type="Pfam" id="PF00159">
    <property type="entry name" value="Hormone_3"/>
    <property type="match status" value="1"/>
</dbReference>
<dbReference type="PRINTS" id="PR00278">
    <property type="entry name" value="PANCHORMONE"/>
</dbReference>
<dbReference type="SMART" id="SM00309">
    <property type="entry name" value="PAH"/>
    <property type="match status" value="1"/>
</dbReference>
<dbReference type="PROSITE" id="PS00265">
    <property type="entry name" value="PANCREATIC_HORMONE_1"/>
    <property type="match status" value="1"/>
</dbReference>
<dbReference type="PROSITE" id="PS50276">
    <property type="entry name" value="PANCREATIC_HORMONE_2"/>
    <property type="match status" value="1"/>
</dbReference>
<accession>P01301</accession>
<accession>Q6T8R7</accession>
<evidence type="ECO:0000250" key="1"/>
<evidence type="ECO:0000250" key="2">
    <source>
        <dbReference type="UniProtKB" id="P01298"/>
    </source>
</evidence>
<evidence type="ECO:0000269" key="3">
    <source ref="2"/>
</evidence>
<evidence type="ECO:0000303" key="4">
    <source>
    </source>
</evidence>
<evidence type="ECO:0000303" key="5">
    <source>
    </source>
</evidence>
<evidence type="ECO:0000305" key="6"/>
<organism>
    <name type="scientific">Ovis aries</name>
    <name type="common">Sheep</name>
    <dbReference type="NCBI Taxonomy" id="9940"/>
    <lineage>
        <taxon>Eukaryota</taxon>
        <taxon>Metazoa</taxon>
        <taxon>Chordata</taxon>
        <taxon>Craniata</taxon>
        <taxon>Vertebrata</taxon>
        <taxon>Euteleostomi</taxon>
        <taxon>Mammalia</taxon>
        <taxon>Eutheria</taxon>
        <taxon>Laurasiatheria</taxon>
        <taxon>Artiodactyla</taxon>
        <taxon>Ruminantia</taxon>
        <taxon>Pecora</taxon>
        <taxon>Bovidae</taxon>
        <taxon>Caprinae</taxon>
        <taxon>Ovis</taxon>
    </lineage>
</organism>
<reference key="1">
    <citation type="journal article" date="2005" name="Am. J. Physiol.">
        <title>Diminished beta-cell replication contributes to reduced beta-cell mass in fetal sheep with intrauterine growth restriction.</title>
        <authorList>
            <person name="Limesand S.W."/>
            <person name="Jensen J."/>
            <person name="Hutton J.C."/>
            <person name="Hay W.W. Jr."/>
        </authorList>
    </citation>
    <scope>NUCLEOTIDE SEQUENCE [MRNA]</scope>
    <source>
        <tissue>Pancreas</tissue>
    </source>
</reference>
<reference key="2">
    <citation type="book" date="1979" name="Methods of hormone radioimmunoassay (2nd ed.)">
        <editorList>
            <person name="Jaffe B.M."/>
            <person name="Behrman H.R."/>
        </editorList>
        <authorList>
            <person name="Chance R.E."/>
            <person name="Moon N.E."/>
            <person name="Johnson M.G."/>
        </authorList>
    </citation>
    <scope>PROTEIN SEQUENCE OF 20-55</scope>
</reference>
<reference key="3">
    <citation type="journal article" date="1984" name="FEBS Lett.">
        <title>Isolation of ovine pancreatic icosapeptide: a peptide product containing one cysteine residue.</title>
        <authorList>
            <person name="Schwartz T.W."/>
            <person name="Hansen H.F."/>
        </authorList>
    </citation>
    <scope>PROTEIN SEQUENCE OF 59-78</scope>
</reference>